<keyword id="KW-0052">Apoplast</keyword>
<keyword id="KW-0134">Cell wall</keyword>
<keyword id="KW-1015">Disulfide bond</keyword>
<keyword id="KW-0325">Glycoprotein</keyword>
<keyword id="KW-0326">Glycosidase</keyword>
<keyword id="KW-0378">Hydrolase</keyword>
<keyword id="KW-1185">Reference proteome</keyword>
<keyword id="KW-0964">Secreted</keyword>
<keyword id="KW-0732">Signal</keyword>
<sequence length="586" mass="66208">MATARARAALVFVALLQMAAVVVVRASHVVYPELQSLEAKHVDGKLRTGYHFQPPKHWINDPNGPMYYKGLYHLFYQYNPKGAVWGNIEWAHSVSTDLIDWTALEPGIYPSKTFDEKGCWSGSATVLPSGVPVIMYTGIDPDERQVQNVAYPVNLSDPYLREWYKPDYNPIINPDGGINASAFRDPTTAWYGPDGHWRLLVGSKVNMKGLAVLYRSRDFKKWVKAHHPLHSAHTGMWECPDFFPVAVAGGSRHYRRGVDTAELHDAAVAEEVKYVLKVSLDLTRYEYYTVGWYDHATDRYVPDAAFPDNDYGLRYDYGDFYASKSFYDPAKRRRIVWGWANESDTVPDDRRKGWAGIQAIPRKLWLSADGKQLVQWPVEELKALRAKHVNVTDKVIKKGNYFEVTGFKSVQSDVDMAFAIKDLSKAEEFDPAWRTDAEALCKKLGSDVDGGVGPFGLWALASGDLKERTAVFFRVFKANDSSHVVLMCNDPTRSSYESKIYRPTFAGFVDVDIAKNKQIALRTLIDHSVVESFGARGKTCILTRVYPRKAVGDDAHLFVFNNGESDVKVTNLDAWEMKTPKMNAEE</sequence>
<organism>
    <name type="scientific">Oryza sativa subsp. japonica</name>
    <name type="common">Rice</name>
    <dbReference type="NCBI Taxonomy" id="39947"/>
    <lineage>
        <taxon>Eukaryota</taxon>
        <taxon>Viridiplantae</taxon>
        <taxon>Streptophyta</taxon>
        <taxon>Embryophyta</taxon>
        <taxon>Tracheophyta</taxon>
        <taxon>Spermatophyta</taxon>
        <taxon>Magnoliopsida</taxon>
        <taxon>Liliopsida</taxon>
        <taxon>Poales</taxon>
        <taxon>Poaceae</taxon>
        <taxon>BOP clade</taxon>
        <taxon>Oryzoideae</taxon>
        <taxon>Oryzeae</taxon>
        <taxon>Oryzinae</taxon>
        <taxon>Oryza</taxon>
        <taxon>Oryza sativa</taxon>
    </lineage>
</organism>
<protein>
    <recommendedName>
        <fullName>Beta-fructofuranosidase, insoluble isoenzyme 3</fullName>
        <ecNumber>3.2.1.26</ecNumber>
    </recommendedName>
    <alternativeName>
        <fullName>Cell wall beta-fructosidase 3</fullName>
    </alternativeName>
    <alternativeName>
        <fullName>Invertase 3</fullName>
    </alternativeName>
    <alternativeName>
        <fullName>OsCIN3</fullName>
    </alternativeName>
    <alternativeName>
        <fullName>Sucrose hydrolase 3</fullName>
    </alternativeName>
</protein>
<comment type="catalytic activity">
    <reaction evidence="3">
        <text>Hydrolysis of terminal non-reducing beta-D-fructofuranoside residues in beta-D-fructofuranosides.</text>
        <dbReference type="EC" id="3.2.1.26"/>
    </reaction>
</comment>
<comment type="subcellular location">
    <subcellularLocation>
        <location evidence="5">Secreted</location>
        <location evidence="5">Extracellular space</location>
        <location evidence="5">Apoplast</location>
    </subcellularLocation>
    <subcellularLocation>
        <location evidence="5">Secreted</location>
        <location evidence="5">Cell wall</location>
    </subcellularLocation>
    <text evidence="5">Associated to the cell wall.</text>
</comment>
<comment type="tissue specificity">
    <text evidence="4">Weakly expressed in flowers.</text>
</comment>
<comment type="similarity">
    <text evidence="5">Belongs to the glycosyl hydrolase 32 family.</text>
</comment>
<comment type="sequence caution" evidence="5">
    <conflict type="erroneous gene model prediction">
        <sequence resource="EMBL-CDS" id="CAD40590"/>
    </conflict>
</comment>
<feature type="signal peptide" evidence="2">
    <location>
        <begin position="1"/>
        <end position="26"/>
    </location>
</feature>
<feature type="chain" id="PRO_0000033381" description="Beta-fructofuranosidase, insoluble isoenzyme 3">
    <location>
        <begin position="27"/>
        <end position="586"/>
    </location>
</feature>
<feature type="active site" evidence="3">
    <location>
        <position position="61"/>
    </location>
</feature>
<feature type="binding site" evidence="1">
    <location>
        <begin position="58"/>
        <end position="61"/>
    </location>
    <ligand>
        <name>substrate</name>
    </ligand>
</feature>
<feature type="binding site" evidence="1">
    <location>
        <position position="77"/>
    </location>
    <ligand>
        <name>substrate</name>
    </ligand>
</feature>
<feature type="binding site" evidence="1">
    <location>
        <position position="85"/>
    </location>
    <ligand>
        <name>substrate</name>
    </ligand>
</feature>
<feature type="binding site" evidence="1">
    <location>
        <begin position="120"/>
        <end position="121"/>
    </location>
    <ligand>
        <name>substrate</name>
    </ligand>
</feature>
<feature type="binding site" evidence="1">
    <location>
        <begin position="184"/>
        <end position="185"/>
    </location>
    <ligand>
        <name>substrate</name>
    </ligand>
</feature>
<feature type="binding site" evidence="1">
    <location>
        <position position="238"/>
    </location>
    <ligand>
        <name>substrate</name>
    </ligand>
</feature>
<feature type="binding site" evidence="1">
    <location>
        <position position="281"/>
    </location>
    <ligand>
        <name>substrate</name>
    </ligand>
</feature>
<feature type="glycosylation site" description="N-linked (GlcNAc...) asparagine" evidence="2">
    <location>
        <position position="154"/>
    </location>
</feature>
<feature type="glycosylation site" description="N-linked (GlcNAc...) asparagine" evidence="2">
    <location>
        <position position="179"/>
    </location>
</feature>
<feature type="glycosylation site" description="N-linked (GlcNAc...) asparagine" evidence="2">
    <location>
        <position position="341"/>
    </location>
</feature>
<feature type="glycosylation site" description="N-linked (GlcNAc...) asparagine" evidence="2">
    <location>
        <position position="390"/>
    </location>
</feature>
<feature type="glycosylation site" description="N-linked (GlcNAc...) asparagine" evidence="2">
    <location>
        <position position="479"/>
    </location>
</feature>
<feature type="disulfide bond" evidence="1">
    <location>
        <begin position="441"/>
        <end position="488"/>
    </location>
</feature>
<accession>Q0JDC6</accession>
<accession>A3ATP1</accession>
<accession>B9FF34</accession>
<accession>Q56UD3</accession>
<accession>Q6VEF3</accession>
<accession>Q7XVJ3</accession>
<accession>Q84TL3</accession>
<reference key="1">
    <citation type="journal article" date="2005" name="Plant Cell Rep.">
        <title>Molecular cloning and expression analysis of the cell-wall invertase gene family in rice (Oryza sativa L.).</title>
        <authorList>
            <person name="Cho J.-I."/>
            <person name="Lee S.-K."/>
            <person name="Ko S."/>
            <person name="Kim H.-K."/>
            <person name="Jun S.-H."/>
            <person name="Lee Y.-H."/>
            <person name="Bhoo S.H."/>
            <person name="Lee K.-W."/>
            <person name="An G."/>
            <person name="Hahn T.-R."/>
            <person name="Jeon J.-S."/>
        </authorList>
    </citation>
    <scope>NUCLEOTIDE SEQUENCE [MRNA]</scope>
    <scope>TISSUE SPECIFICITY</scope>
    <source>
        <strain>cv. Nipponbare</strain>
    </source>
</reference>
<reference key="2">
    <citation type="journal article" date="2002" name="Nature">
        <title>Sequence and analysis of rice chromosome 4.</title>
        <authorList>
            <person name="Feng Q."/>
            <person name="Zhang Y."/>
            <person name="Hao P."/>
            <person name="Wang S."/>
            <person name="Fu G."/>
            <person name="Huang Y."/>
            <person name="Li Y."/>
            <person name="Zhu J."/>
            <person name="Liu Y."/>
            <person name="Hu X."/>
            <person name="Jia P."/>
            <person name="Zhang Y."/>
            <person name="Zhao Q."/>
            <person name="Ying K."/>
            <person name="Yu S."/>
            <person name="Tang Y."/>
            <person name="Weng Q."/>
            <person name="Zhang L."/>
            <person name="Lu Y."/>
            <person name="Mu J."/>
            <person name="Lu Y."/>
            <person name="Zhang L.S."/>
            <person name="Yu Z."/>
            <person name="Fan D."/>
            <person name="Liu X."/>
            <person name="Lu T."/>
            <person name="Li C."/>
            <person name="Wu Y."/>
            <person name="Sun T."/>
            <person name="Lei H."/>
            <person name="Li T."/>
            <person name="Hu H."/>
            <person name="Guan J."/>
            <person name="Wu M."/>
            <person name="Zhang R."/>
            <person name="Zhou B."/>
            <person name="Chen Z."/>
            <person name="Chen L."/>
            <person name="Jin Z."/>
            <person name="Wang R."/>
            <person name="Yin H."/>
            <person name="Cai Z."/>
            <person name="Ren S."/>
            <person name="Lv G."/>
            <person name="Gu W."/>
            <person name="Zhu G."/>
            <person name="Tu Y."/>
            <person name="Jia J."/>
            <person name="Zhang Y."/>
            <person name="Chen J."/>
            <person name="Kang H."/>
            <person name="Chen X."/>
            <person name="Shao C."/>
            <person name="Sun Y."/>
            <person name="Hu Q."/>
            <person name="Zhang X."/>
            <person name="Zhang W."/>
            <person name="Wang L."/>
            <person name="Ding C."/>
            <person name="Sheng H."/>
            <person name="Gu J."/>
            <person name="Chen S."/>
            <person name="Ni L."/>
            <person name="Zhu F."/>
            <person name="Chen W."/>
            <person name="Lan L."/>
            <person name="Lai Y."/>
            <person name="Cheng Z."/>
            <person name="Gu M."/>
            <person name="Jiang J."/>
            <person name="Li J."/>
            <person name="Hong G."/>
            <person name="Xue Y."/>
            <person name="Han B."/>
        </authorList>
    </citation>
    <scope>NUCLEOTIDE SEQUENCE [LARGE SCALE GENOMIC DNA]</scope>
    <source>
        <strain>cv. Nipponbare</strain>
    </source>
</reference>
<reference key="3">
    <citation type="journal article" date="2005" name="Nature">
        <title>The map-based sequence of the rice genome.</title>
        <authorList>
            <consortium name="International rice genome sequencing project (IRGSP)"/>
        </authorList>
    </citation>
    <scope>NUCLEOTIDE SEQUENCE [LARGE SCALE GENOMIC DNA]</scope>
    <source>
        <strain>cv. Nipponbare</strain>
    </source>
</reference>
<reference key="4">
    <citation type="journal article" date="2008" name="Nucleic Acids Res.">
        <title>The rice annotation project database (RAP-DB): 2008 update.</title>
        <authorList>
            <consortium name="The rice annotation project (RAP)"/>
        </authorList>
    </citation>
    <scope>GENOME REANNOTATION</scope>
    <source>
        <strain>cv. Nipponbare</strain>
    </source>
</reference>
<reference key="5">
    <citation type="journal article" date="2013" name="Rice">
        <title>Improvement of the Oryza sativa Nipponbare reference genome using next generation sequence and optical map data.</title>
        <authorList>
            <person name="Kawahara Y."/>
            <person name="de la Bastide M."/>
            <person name="Hamilton J.P."/>
            <person name="Kanamori H."/>
            <person name="McCombie W.R."/>
            <person name="Ouyang S."/>
            <person name="Schwartz D.C."/>
            <person name="Tanaka T."/>
            <person name="Wu J."/>
            <person name="Zhou S."/>
            <person name="Childs K.L."/>
            <person name="Davidson R.M."/>
            <person name="Lin H."/>
            <person name="Quesada-Ocampo L."/>
            <person name="Vaillancourt B."/>
            <person name="Sakai H."/>
            <person name="Lee S.S."/>
            <person name="Kim J."/>
            <person name="Numa H."/>
            <person name="Itoh T."/>
            <person name="Buell C.R."/>
            <person name="Matsumoto T."/>
        </authorList>
    </citation>
    <scope>GENOME REANNOTATION</scope>
    <source>
        <strain>cv. Nipponbare</strain>
    </source>
</reference>
<reference key="6">
    <citation type="journal article" date="2005" name="PLoS Biol.">
        <title>The genomes of Oryza sativa: a history of duplications.</title>
        <authorList>
            <person name="Yu J."/>
            <person name="Wang J."/>
            <person name="Lin W."/>
            <person name="Li S."/>
            <person name="Li H."/>
            <person name="Zhou J."/>
            <person name="Ni P."/>
            <person name="Dong W."/>
            <person name="Hu S."/>
            <person name="Zeng C."/>
            <person name="Zhang J."/>
            <person name="Zhang Y."/>
            <person name="Li R."/>
            <person name="Xu Z."/>
            <person name="Li S."/>
            <person name="Li X."/>
            <person name="Zheng H."/>
            <person name="Cong L."/>
            <person name="Lin L."/>
            <person name="Yin J."/>
            <person name="Geng J."/>
            <person name="Li G."/>
            <person name="Shi J."/>
            <person name="Liu J."/>
            <person name="Lv H."/>
            <person name="Li J."/>
            <person name="Wang J."/>
            <person name="Deng Y."/>
            <person name="Ran L."/>
            <person name="Shi X."/>
            <person name="Wang X."/>
            <person name="Wu Q."/>
            <person name="Li C."/>
            <person name="Ren X."/>
            <person name="Wang J."/>
            <person name="Wang X."/>
            <person name="Li D."/>
            <person name="Liu D."/>
            <person name="Zhang X."/>
            <person name="Ji Z."/>
            <person name="Zhao W."/>
            <person name="Sun Y."/>
            <person name="Zhang Z."/>
            <person name="Bao J."/>
            <person name="Han Y."/>
            <person name="Dong L."/>
            <person name="Ji J."/>
            <person name="Chen P."/>
            <person name="Wu S."/>
            <person name="Liu J."/>
            <person name="Xiao Y."/>
            <person name="Bu D."/>
            <person name="Tan J."/>
            <person name="Yang L."/>
            <person name="Ye C."/>
            <person name="Zhang J."/>
            <person name="Xu J."/>
            <person name="Zhou Y."/>
            <person name="Yu Y."/>
            <person name="Zhang B."/>
            <person name="Zhuang S."/>
            <person name="Wei H."/>
            <person name="Liu B."/>
            <person name="Lei M."/>
            <person name="Yu H."/>
            <person name="Li Y."/>
            <person name="Xu H."/>
            <person name="Wei S."/>
            <person name="He X."/>
            <person name="Fang L."/>
            <person name="Zhang Z."/>
            <person name="Zhang Y."/>
            <person name="Huang X."/>
            <person name="Su Z."/>
            <person name="Tong W."/>
            <person name="Li J."/>
            <person name="Tong Z."/>
            <person name="Li S."/>
            <person name="Ye J."/>
            <person name="Wang L."/>
            <person name="Fang L."/>
            <person name="Lei T."/>
            <person name="Chen C.-S."/>
            <person name="Chen H.-C."/>
            <person name="Xu Z."/>
            <person name="Li H."/>
            <person name="Huang H."/>
            <person name="Zhang F."/>
            <person name="Xu H."/>
            <person name="Li N."/>
            <person name="Zhao C."/>
            <person name="Li S."/>
            <person name="Dong L."/>
            <person name="Huang Y."/>
            <person name="Li L."/>
            <person name="Xi Y."/>
            <person name="Qi Q."/>
            <person name="Li W."/>
            <person name="Zhang B."/>
            <person name="Hu W."/>
            <person name="Zhang Y."/>
            <person name="Tian X."/>
            <person name="Jiao Y."/>
            <person name="Liang X."/>
            <person name="Jin J."/>
            <person name="Gao L."/>
            <person name="Zheng W."/>
            <person name="Hao B."/>
            <person name="Liu S.-M."/>
            <person name="Wang W."/>
            <person name="Yuan L."/>
            <person name="Cao M."/>
            <person name="McDermott J."/>
            <person name="Samudrala R."/>
            <person name="Wang J."/>
            <person name="Wong G.K.-S."/>
            <person name="Yang H."/>
        </authorList>
    </citation>
    <scope>NUCLEOTIDE SEQUENCE [LARGE SCALE GENOMIC DNA]</scope>
    <source>
        <strain>cv. Nipponbare</strain>
    </source>
</reference>
<dbReference type="EC" id="3.2.1.26"/>
<dbReference type="EMBL" id="AY578160">
    <property type="protein sequence ID" value="AAT84403.1"/>
    <property type="molecule type" value="mRNA"/>
</dbReference>
<dbReference type="EMBL" id="AL662945">
    <property type="protein sequence ID" value="CAD40590.2"/>
    <property type="status" value="ALT_SEQ"/>
    <property type="molecule type" value="Genomic_DNA"/>
</dbReference>
<dbReference type="EMBL" id="AP008210">
    <property type="protein sequence ID" value="BAF14661.1"/>
    <property type="molecule type" value="Genomic_DNA"/>
</dbReference>
<dbReference type="EMBL" id="AP014960">
    <property type="protein sequence ID" value="BAS89134.1"/>
    <property type="molecule type" value="Genomic_DNA"/>
</dbReference>
<dbReference type="EMBL" id="CM000141">
    <property type="protein sequence ID" value="EEE60967.1"/>
    <property type="molecule type" value="Genomic_DNA"/>
</dbReference>
<dbReference type="RefSeq" id="XP_015635053.1">
    <property type="nucleotide sequence ID" value="XM_015779567.1"/>
</dbReference>
<dbReference type="SMR" id="Q0JDC6"/>
<dbReference type="FunCoup" id="Q0JDC6">
    <property type="interactions" value="181"/>
</dbReference>
<dbReference type="STRING" id="39947.Q0JDC6"/>
<dbReference type="CAZy" id="GH32">
    <property type="family name" value="Glycoside Hydrolase Family 32"/>
</dbReference>
<dbReference type="GlyCosmos" id="Q0JDC6">
    <property type="glycosylation" value="5 sites, No reported glycans"/>
</dbReference>
<dbReference type="PaxDb" id="39947-Q0JDC6"/>
<dbReference type="EnsemblPlants" id="Os04t0413200-01">
    <property type="protein sequence ID" value="Os04t0413200-01"/>
    <property type="gene ID" value="Os04g0413200"/>
</dbReference>
<dbReference type="Gramene" id="Os04t0413200-01">
    <property type="protein sequence ID" value="Os04t0413200-01"/>
    <property type="gene ID" value="Os04g0413200"/>
</dbReference>
<dbReference type="KEGG" id="dosa:Os04g0413200"/>
<dbReference type="eggNOG" id="KOG0228">
    <property type="taxonomic scope" value="Eukaryota"/>
</dbReference>
<dbReference type="HOGENOM" id="CLU_001528_6_0_1"/>
<dbReference type="InParanoid" id="Q0JDC6"/>
<dbReference type="OMA" id="DAWEMRT"/>
<dbReference type="OrthoDB" id="202537at2759"/>
<dbReference type="Proteomes" id="UP000000763">
    <property type="component" value="Chromosome 4"/>
</dbReference>
<dbReference type="Proteomes" id="UP000007752">
    <property type="component" value="Chromosome 4"/>
</dbReference>
<dbReference type="Proteomes" id="UP000059680">
    <property type="component" value="Chromosome 4"/>
</dbReference>
<dbReference type="GO" id="GO:0048046">
    <property type="term" value="C:apoplast"/>
    <property type="evidence" value="ECO:0007669"/>
    <property type="project" value="UniProtKB-SubCell"/>
</dbReference>
<dbReference type="GO" id="GO:0004564">
    <property type="term" value="F:beta-fructofuranosidase activity"/>
    <property type="evidence" value="ECO:0007669"/>
    <property type="project" value="UniProtKB-EC"/>
</dbReference>
<dbReference type="GO" id="GO:0005975">
    <property type="term" value="P:carbohydrate metabolic process"/>
    <property type="evidence" value="ECO:0007669"/>
    <property type="project" value="InterPro"/>
</dbReference>
<dbReference type="CDD" id="cd18624">
    <property type="entry name" value="GH32_Fruct1-like"/>
    <property type="match status" value="1"/>
</dbReference>
<dbReference type="FunFam" id="2.115.10.20:FF:000001">
    <property type="entry name" value="Beta-fructofuranosidase, insoluble isoenzyme CWINV1"/>
    <property type="match status" value="1"/>
</dbReference>
<dbReference type="FunFam" id="2.60.120.560:FF:000002">
    <property type="entry name" value="Beta-fructofuranosidase, insoluble isoenzyme CWINV1"/>
    <property type="match status" value="1"/>
</dbReference>
<dbReference type="Gene3D" id="2.60.120.560">
    <property type="entry name" value="Exo-inulinase, domain 1"/>
    <property type="match status" value="1"/>
</dbReference>
<dbReference type="Gene3D" id="2.115.10.20">
    <property type="entry name" value="Glycosyl hydrolase domain, family 43"/>
    <property type="match status" value="1"/>
</dbReference>
<dbReference type="InterPro" id="IPR013320">
    <property type="entry name" value="ConA-like_dom_sf"/>
</dbReference>
<dbReference type="InterPro" id="IPR050551">
    <property type="entry name" value="Fructan_Metab_Enzymes"/>
</dbReference>
<dbReference type="InterPro" id="IPR001362">
    <property type="entry name" value="Glyco_hydro_32"/>
</dbReference>
<dbReference type="InterPro" id="IPR018053">
    <property type="entry name" value="Glyco_hydro_32_AS"/>
</dbReference>
<dbReference type="InterPro" id="IPR013189">
    <property type="entry name" value="Glyco_hydro_32_C"/>
</dbReference>
<dbReference type="InterPro" id="IPR013148">
    <property type="entry name" value="Glyco_hydro_32_N"/>
</dbReference>
<dbReference type="InterPro" id="IPR023296">
    <property type="entry name" value="Glyco_hydro_beta-prop_sf"/>
</dbReference>
<dbReference type="PANTHER" id="PTHR31953">
    <property type="entry name" value="BETA-FRUCTOFURANOSIDASE, INSOLUBLE ISOENZYME CWINV1-RELATED"/>
    <property type="match status" value="1"/>
</dbReference>
<dbReference type="Pfam" id="PF08244">
    <property type="entry name" value="Glyco_hydro_32C"/>
    <property type="match status" value="1"/>
</dbReference>
<dbReference type="Pfam" id="PF00251">
    <property type="entry name" value="Glyco_hydro_32N"/>
    <property type="match status" value="1"/>
</dbReference>
<dbReference type="SMART" id="SM00640">
    <property type="entry name" value="Glyco_32"/>
    <property type="match status" value="1"/>
</dbReference>
<dbReference type="SUPFAM" id="SSF75005">
    <property type="entry name" value="Arabinanase/levansucrase/invertase"/>
    <property type="match status" value="1"/>
</dbReference>
<dbReference type="SUPFAM" id="SSF49899">
    <property type="entry name" value="Concanavalin A-like lectins/glucanases"/>
    <property type="match status" value="1"/>
</dbReference>
<dbReference type="PROSITE" id="PS00609">
    <property type="entry name" value="GLYCOSYL_HYDROL_F32"/>
    <property type="match status" value="1"/>
</dbReference>
<evidence type="ECO:0000250" key="1"/>
<evidence type="ECO:0000255" key="2"/>
<evidence type="ECO:0000255" key="3">
    <source>
        <dbReference type="PROSITE-ProRule" id="PRU10067"/>
    </source>
</evidence>
<evidence type="ECO:0000269" key="4">
    <source>
    </source>
</evidence>
<evidence type="ECO:0000305" key="5"/>
<evidence type="ECO:0000312" key="6">
    <source>
        <dbReference type="EMBL" id="EEE60967.1"/>
    </source>
</evidence>
<gene>
    <name type="primary">CIN3</name>
    <name type="synonym">INV4</name>
    <name type="ordered locus">Os04g0413200</name>
    <name type="ordered locus">LOC_Os04g33720</name>
    <name type="ORF">OJ000126_13.7</name>
    <name type="ORF">OsJ_014163</name>
    <name evidence="6" type="ORF">OsJ_14738</name>
</gene>
<name>INV3_ORYSJ</name>
<proteinExistence type="evidence at transcript level"/>